<sequence length="82" mass="8900">MKTLLLTLVVVTIVCLDLGYTRKCHNSPLSLVYQTCPIGQNICFKINVKEAPSIPVKRACAATCPKSSALVKVVCCKTDKCN</sequence>
<keyword id="KW-1015">Disulfide bond</keyword>
<keyword id="KW-0472">Membrane</keyword>
<keyword id="KW-0964">Secreted</keyword>
<keyword id="KW-0732">Signal</keyword>
<keyword id="KW-1052">Target cell membrane</keyword>
<keyword id="KW-1053">Target membrane</keyword>
<keyword id="KW-0800">Toxin</keyword>
<proteinExistence type="inferred from homology"/>
<reference key="1">
    <citation type="journal article" date="2004" name="Biochem. Genet.">
        <title>Molecular cloning and evolution of the genes encoding the precursors of taiwan cobra cardiotoxin and cardiotoxin-like basic protein.</title>
        <authorList>
            <person name="Chang L.-S."/>
            <person name="Lin S.-K."/>
            <person name="Chung C."/>
        </authorList>
    </citation>
    <scope>NUCLEOTIDE SEQUENCE [GENOMIC DNA]</scope>
    <source>
        <tissue>Liver</tissue>
    </source>
</reference>
<name>3SOF3_NAJAT</name>
<organism>
    <name type="scientific">Naja atra</name>
    <name type="common">Chinese cobra</name>
    <dbReference type="NCBI Taxonomy" id="8656"/>
    <lineage>
        <taxon>Eukaryota</taxon>
        <taxon>Metazoa</taxon>
        <taxon>Chordata</taxon>
        <taxon>Craniata</taxon>
        <taxon>Vertebrata</taxon>
        <taxon>Euteleostomi</taxon>
        <taxon>Lepidosauria</taxon>
        <taxon>Squamata</taxon>
        <taxon>Bifurcata</taxon>
        <taxon>Unidentata</taxon>
        <taxon>Episquamata</taxon>
        <taxon>Toxicofera</taxon>
        <taxon>Serpentes</taxon>
        <taxon>Colubroidea</taxon>
        <taxon>Elapidae</taxon>
        <taxon>Elapinae</taxon>
        <taxon>Naja</taxon>
    </lineage>
</organism>
<evidence type="ECO:0000250" key="1">
    <source>
        <dbReference type="UniProtKB" id="P14541"/>
    </source>
</evidence>
<evidence type="ECO:0000250" key="2">
    <source>
        <dbReference type="UniProtKB" id="P60301"/>
    </source>
</evidence>
<evidence type="ECO:0000250" key="3">
    <source>
        <dbReference type="UniProtKB" id="P62375"/>
    </source>
</evidence>
<evidence type="ECO:0000255" key="4"/>
<evidence type="ECO:0000305" key="5"/>
<comment type="function">
    <text evidence="1">Has low cytotoxic activity.</text>
</comment>
<comment type="subcellular location">
    <subcellularLocation>
        <location evidence="3">Secreted</location>
    </subcellularLocation>
    <subcellularLocation>
        <location evidence="3">Target cell membrane</location>
    </subcellularLocation>
</comment>
<comment type="tissue specificity">
    <text evidence="5">Expressed by the venom gland.</text>
</comment>
<comment type="miscellaneous">
    <text evidence="5">Is classified as a P-type cytotoxin, since a proline residue stands at position 52 (Pro-31 in standard classification).</text>
</comment>
<comment type="similarity">
    <text evidence="5">Belongs to the three-finger toxin family. Short-chain subfamily. Orphan group XV sub-subfamily.</text>
</comment>
<protein>
    <recommendedName>
        <fullName>Cytotoxin homolog Clbp-3</fullName>
    </recommendedName>
    <alternativeName>
        <fullName>Cardiotoxin-like basic protein 3</fullName>
        <shortName>CLBP3</shortName>
    </alternativeName>
</protein>
<dbReference type="EMBL" id="AJ312212">
    <property type="protein sequence ID" value="CAC85538.1"/>
    <property type="molecule type" value="Genomic_DNA"/>
</dbReference>
<dbReference type="SMR" id="Q8UUK0"/>
<dbReference type="GO" id="GO:0005576">
    <property type="term" value="C:extracellular region"/>
    <property type="evidence" value="ECO:0007669"/>
    <property type="project" value="UniProtKB-SubCell"/>
</dbReference>
<dbReference type="GO" id="GO:0016020">
    <property type="term" value="C:membrane"/>
    <property type="evidence" value="ECO:0007669"/>
    <property type="project" value="UniProtKB-KW"/>
</dbReference>
<dbReference type="GO" id="GO:0044218">
    <property type="term" value="C:other organism cell membrane"/>
    <property type="evidence" value="ECO:0007669"/>
    <property type="project" value="UniProtKB-KW"/>
</dbReference>
<dbReference type="GO" id="GO:0090729">
    <property type="term" value="F:toxin activity"/>
    <property type="evidence" value="ECO:0007669"/>
    <property type="project" value="UniProtKB-KW"/>
</dbReference>
<dbReference type="CDD" id="cd00206">
    <property type="entry name" value="TFP_snake_toxin"/>
    <property type="match status" value="1"/>
</dbReference>
<dbReference type="FunFam" id="2.10.60.10:FF:000024">
    <property type="entry name" value="Cytotoxin 1"/>
    <property type="match status" value="1"/>
</dbReference>
<dbReference type="Gene3D" id="2.10.60.10">
    <property type="entry name" value="CD59"/>
    <property type="match status" value="1"/>
</dbReference>
<dbReference type="InterPro" id="IPR003572">
    <property type="entry name" value="Cytotoxin_Cobra"/>
</dbReference>
<dbReference type="InterPro" id="IPR003571">
    <property type="entry name" value="Snake_3FTx"/>
</dbReference>
<dbReference type="InterPro" id="IPR045860">
    <property type="entry name" value="Snake_toxin-like_sf"/>
</dbReference>
<dbReference type="InterPro" id="IPR054131">
    <property type="entry name" value="Toxin_cobra-type"/>
</dbReference>
<dbReference type="Pfam" id="PF21947">
    <property type="entry name" value="Toxin_cobra-type"/>
    <property type="match status" value="1"/>
</dbReference>
<dbReference type="PRINTS" id="PR00282">
    <property type="entry name" value="CYTOTOXIN"/>
</dbReference>
<dbReference type="SUPFAM" id="SSF57302">
    <property type="entry name" value="Snake toxin-like"/>
    <property type="match status" value="1"/>
</dbReference>
<feature type="signal peptide" evidence="4">
    <location>
        <begin position="1"/>
        <end position="21"/>
    </location>
</feature>
<feature type="chain" id="PRO_5000067495" description="Cytotoxin homolog Clbp-3">
    <location>
        <begin position="22"/>
        <end position="82"/>
    </location>
</feature>
<feature type="disulfide bond" evidence="2">
    <location>
        <begin position="24"/>
        <end position="43"/>
    </location>
</feature>
<feature type="disulfide bond" evidence="2">
    <location>
        <begin position="36"/>
        <end position="60"/>
    </location>
</feature>
<feature type="disulfide bond" evidence="2">
    <location>
        <begin position="64"/>
        <end position="75"/>
    </location>
</feature>
<feature type="disulfide bond" evidence="2">
    <location>
        <begin position="76"/>
        <end position="81"/>
    </location>
</feature>
<accession>Q8UUK0</accession>